<accession>P11884</accession>
<accession>Q6Q288</accession>
<accession>Q6Q289</accession>
<accession>Q6Q290</accession>
<accession>Q8K3V8</accession>
<accession>Q91ZD7</accession>
<protein>
    <recommendedName>
        <fullName>Aldehyde dehydrogenase, mitochondrial</fullName>
        <ecNumber>1.2.1.3</ecNumber>
    </recommendedName>
    <alternativeName>
        <fullName>ALDH class 2</fullName>
    </alternativeName>
    <alternativeName>
        <fullName>ALDH-E2</fullName>
    </alternativeName>
    <alternativeName>
        <fullName>ALDH1</fullName>
    </alternativeName>
</protein>
<keyword id="KW-0002">3D-structure</keyword>
<keyword id="KW-0007">Acetylation</keyword>
<keyword id="KW-0903">Direct protein sequencing</keyword>
<keyword id="KW-0496">Mitochondrion</keyword>
<keyword id="KW-0520">NAD</keyword>
<keyword id="KW-0560">Oxidoreductase</keyword>
<keyword id="KW-1185">Reference proteome</keyword>
<keyword id="KW-0809">Transit peptide</keyword>
<keyword id="KW-0832">Ubl conjugation</keyword>
<feature type="transit peptide" description="Mitochondrion">
    <location>
        <begin position="1"/>
        <end position="19"/>
    </location>
</feature>
<feature type="chain" id="PRO_0000007170" description="Aldehyde dehydrogenase, mitochondrial">
    <location>
        <begin position="20"/>
        <end position="519"/>
    </location>
</feature>
<feature type="short sequence motif" description="SIFI-degron" evidence="2">
    <location>
        <begin position="12"/>
        <end position="26"/>
    </location>
</feature>
<feature type="active site" description="Proton acceptor">
    <location>
        <position position="287"/>
    </location>
</feature>
<feature type="active site" description="Nucleophile">
    <location>
        <position position="321"/>
    </location>
</feature>
<feature type="binding site" evidence="1">
    <location>
        <begin position="264"/>
        <end position="269"/>
    </location>
    <ligand>
        <name>NAD(+)</name>
        <dbReference type="ChEBI" id="CHEBI:57540"/>
    </ligand>
</feature>
<feature type="site" description="Transition state stabilizer" evidence="3">
    <location>
        <position position="188"/>
    </location>
</feature>
<feature type="modified residue" description="N6-acetyllysine" evidence="4">
    <location>
        <position position="54"/>
    </location>
</feature>
<feature type="modified residue" description="N6-acetyllysine" evidence="4">
    <location>
        <position position="75"/>
    </location>
</feature>
<feature type="modified residue" description="N6-acetyllysine" evidence="4">
    <location>
        <position position="80"/>
    </location>
</feature>
<feature type="modified residue" description="N6-acetyllysine" evidence="4">
    <location>
        <position position="161"/>
    </location>
</feature>
<feature type="modified residue" description="N6-acetyllysine" evidence="4">
    <location>
        <position position="370"/>
    </location>
</feature>
<feature type="modified residue" description="N6-acetyllysine" evidence="4">
    <location>
        <position position="377"/>
    </location>
</feature>
<feature type="modified residue" description="N6-acetyllysine" evidence="4">
    <location>
        <position position="385"/>
    </location>
</feature>
<feature type="modified residue" description="N6-acetyllysine" evidence="4">
    <location>
        <position position="409"/>
    </location>
</feature>
<feature type="modified residue" description="N6-acetyllysine" evidence="4">
    <location>
        <position position="428"/>
    </location>
</feature>
<feature type="modified residue" description="N6-acetyllysine" evidence="4">
    <location>
        <position position="430"/>
    </location>
</feature>
<feature type="modified residue" description="N6-acetyllysine" evidence="4">
    <location>
        <position position="443"/>
    </location>
</feature>
<feature type="modified residue" description="N6-acetyllysine" evidence="4">
    <location>
        <position position="453"/>
    </location>
</feature>
<feature type="sequence variant" description="In allele Aldh2*2 and allele Aldh2*3; in strains UChA and UChB." evidence="5">
    <original>Q</original>
    <variation>R</variation>
    <location>
        <position position="86"/>
    </location>
</feature>
<feature type="sequence variant" description="In allele Aldh2*3; in strain: UChB." evidence="5">
    <original>E</original>
    <variation>K</variation>
    <location>
        <position position="498"/>
    </location>
</feature>
<feature type="helix" evidence="7">
    <location>
        <begin position="13"/>
        <end position="15"/>
    </location>
</feature>
<feature type="helix" evidence="8">
    <location>
        <begin position="16"/>
        <end position="18"/>
    </location>
</feature>
<reference key="1">
    <citation type="journal article" date="1989" name="Eur. J. Biochem.">
        <title>Primary structures of rat and bovine liver mitochondrial aldehyde dehydrogenases deduced from cDNA sequences.</title>
        <authorList>
            <person name="Farres J."/>
            <person name="Guan K.-L."/>
            <person name="Weiner H."/>
        </authorList>
    </citation>
    <scope>NUCLEOTIDE SEQUENCE [MRNA]</scope>
    <source>
        <strain>Sprague-Dawley</strain>
        <tissue>Liver</tissue>
    </source>
</reference>
<reference key="2">
    <citation type="journal article" date="2004" name="Genome Res.">
        <title>The status, quality, and expansion of the NIH full-length cDNA project: the Mammalian Gene Collection (MGC).</title>
        <authorList>
            <consortium name="The MGC Project Team"/>
        </authorList>
    </citation>
    <scope>NUCLEOTIDE SEQUENCE [LARGE SCALE MRNA]</scope>
    <source>
        <tissue>Prostate</tissue>
    </source>
</reference>
<reference key="3">
    <citation type="journal article" date="1988" name="Biochem. Biophys. Res. Commun.">
        <title>Sequence of the signal peptide for rat liver mitochondrial aldehyde dehydrogenase.</title>
        <authorList>
            <person name="Farres J."/>
            <person name="Guan K.-L."/>
            <person name="Weiner H."/>
        </authorList>
    </citation>
    <scope>NUCLEOTIDE SEQUENCE [MRNA] OF 1-29</scope>
    <source>
        <tissue>Liver</tissue>
    </source>
</reference>
<reference key="4">
    <citation type="journal article" date="1991" name="Arch. Biochem. Biophys.">
        <title>Purification and characterization of catalytically active precursor of rat liver mitochondrial aldehyde dehydrogenase expressed in Escherichia coli.</title>
        <authorList>
            <person name="Jeng J."/>
            <person name="Weiner H."/>
        </authorList>
    </citation>
    <scope>PROTEIN SEQUENCE OF 1-19</scope>
    <source>
        <tissue>Liver</tissue>
    </source>
</reference>
<reference key="5">
    <citation type="journal article" date="2003" name="Pharmacogenetics">
        <title>Mutations in mitochondrial aldehyde dehydrogenase (ALDH2) change cofactor affinity and segregate with voluntary alcohol consumption in rats.</title>
        <authorList>
            <person name="Sapag A."/>
            <person name="Tampier L."/>
            <person name="Valle-Prieto A."/>
            <person name="Quintanilla M.E."/>
            <person name="Moncada C."/>
            <person name="Israel Y."/>
        </authorList>
    </citation>
    <scope>NUCLEOTIDE SEQUENCE [MRNA] OF 10-519</scope>
    <scope>VARIANTS ARG-86 AND LYS-498</scope>
    <source>
        <strain>UChA</strain>
        <strain>UChB</strain>
        <strain>Wistar</strain>
        <tissue>Liver</tissue>
    </source>
</reference>
<reference key="6">
    <citation type="submission" date="2002-12" db="EMBL/GenBank/DDBJ databases">
        <title>Genomic structure and sequence of the mitochondrial aldehyde dehydrogenase gene (ALDH2) of the Lewis rat.</title>
        <authorList>
            <person name="Sapag A."/>
            <person name="Urra S."/>
            <person name="Gonzalez-Jara F."/>
            <person name="Moncada C."/>
            <person name="Israel Y."/>
        </authorList>
    </citation>
    <scope>NUCLEOTIDE SEQUENCE [MRNA] OF 32-519</scope>
    <source>
        <strain>Lewis</strain>
    </source>
</reference>
<reference key="7">
    <citation type="submission" date="2001-05" db="EMBL/GenBank/DDBJ databases">
        <title>Genomic structure and sequence of the mitochondrial aldehyde dehydrogenase gene of the Lewis rat.</title>
        <authorList>
            <person name="Sapag A."/>
            <person name="Urra S."/>
            <person name="Gonzalez-Jara F."/>
            <person name="Moncada C."/>
            <person name="Israel Y."/>
        </authorList>
    </citation>
    <scope>NUCLEOTIDE SEQUENCE [GENOMIC DNA] OF 77-519</scope>
    <source>
        <strain>Lewis</strain>
        <tissue>Liver</tissue>
    </source>
</reference>
<reference key="8">
    <citation type="submission" date="2009-01" db="UniProtKB">
        <authorList>
            <person name="Lubec G."/>
            <person name="Afjehi-Sadat L."/>
            <person name="Chen W.-Q."/>
        </authorList>
    </citation>
    <scope>PROTEIN SEQUENCE OF 162-174; 198-228; 260-340; 327-340; 358-370; 397-409 AND 495-508</scope>
    <scope>IDENTIFICATION BY MASS SPECTROMETRY</scope>
    <source>
        <strain>Sprague-Dawley</strain>
        <tissue>Hippocampus</tissue>
        <tissue>Spinal cord</tissue>
    </source>
</reference>
<reference key="9">
    <citation type="journal article" date="1990" name="FEBS Lett.">
        <title>A mitochondrial protein fraction catalyzing transport of the K+ analog T1+.</title>
        <authorList>
            <person name="Diwan J.J."/>
            <person name="Paliwal R."/>
            <person name="Kaftan E."/>
            <person name="Bawa R."/>
        </authorList>
    </citation>
    <scope>PROTEIN SEQUENCE OF 327-340</scope>
</reference>
<reference key="10">
    <citation type="journal article" date="2000" name="Cell">
        <title>Structural basis of presequence recognition by the mitochondrial protein import receptor Tom20.</title>
        <authorList>
            <person name="Abe Y."/>
            <person name="Shodai T."/>
            <person name="Muto T."/>
            <person name="Mihara K."/>
            <person name="Torii H."/>
            <person name="Nishikawa S."/>
            <person name="Endo T."/>
            <person name="Kohda D."/>
        </authorList>
    </citation>
    <scope>STRUCTURE BY NMR OF 12-22</scope>
</reference>
<evidence type="ECO:0000250" key="1"/>
<evidence type="ECO:0000250" key="2">
    <source>
        <dbReference type="UniProtKB" id="P05091"/>
    </source>
</evidence>
<evidence type="ECO:0000250" key="3">
    <source>
        <dbReference type="UniProtKB" id="P20000"/>
    </source>
</evidence>
<evidence type="ECO:0000250" key="4">
    <source>
        <dbReference type="UniProtKB" id="P47738"/>
    </source>
</evidence>
<evidence type="ECO:0000269" key="5">
    <source>
    </source>
</evidence>
<evidence type="ECO:0000305" key="6"/>
<evidence type="ECO:0007829" key="7">
    <source>
        <dbReference type="PDB" id="2V1T"/>
    </source>
</evidence>
<evidence type="ECO:0007829" key="8">
    <source>
        <dbReference type="PDB" id="5AZ8"/>
    </source>
</evidence>
<comment type="function">
    <text evidence="2">Required for clearance of cellular formaldehyde, a cytotoxic and carcinogenic metabolite that induces DNA damage.</text>
</comment>
<comment type="catalytic activity">
    <reaction>
        <text>an aldehyde + NAD(+) + H2O = a carboxylate + NADH + 2 H(+)</text>
        <dbReference type="Rhea" id="RHEA:16185"/>
        <dbReference type="ChEBI" id="CHEBI:15377"/>
        <dbReference type="ChEBI" id="CHEBI:15378"/>
        <dbReference type="ChEBI" id="CHEBI:17478"/>
        <dbReference type="ChEBI" id="CHEBI:29067"/>
        <dbReference type="ChEBI" id="CHEBI:57540"/>
        <dbReference type="ChEBI" id="CHEBI:57945"/>
        <dbReference type="EC" id="1.2.1.3"/>
    </reaction>
</comment>
<comment type="pathway">
    <text>Alcohol metabolism; ethanol degradation; acetate from ethanol: step 2/2.</text>
</comment>
<comment type="subunit">
    <text>Homotetramer.</text>
</comment>
<comment type="interaction">
    <interactant intactId="EBI-916402">
        <id>P11884</id>
    </interactant>
    <interactant intactId="EBI-30302">
        <id>Q02776</id>
        <label>TIM50</label>
    </interactant>
    <organismsDiffer>true</organismsDiffer>
    <experiments>3</experiments>
</comment>
<comment type="subcellular location">
    <subcellularLocation>
        <location>Mitochondrion matrix</location>
    </subcellularLocation>
</comment>
<comment type="PTM">
    <text evidence="2">In response to mitochondrial stress, the precursor protein is ubiquitinated by the SIFI complex in the cytoplasm before mitochondrial import, leading to its degradation. Within the SIFI complex, UBR4 initiates ubiquitin chain that are further elongated or branched by KCMF1.</text>
</comment>
<comment type="similarity">
    <text evidence="6">Belongs to the aldehyde dehydrogenase family.</text>
</comment>
<dbReference type="EC" id="1.2.1.3"/>
<dbReference type="EMBL" id="X14977">
    <property type="protein sequence ID" value="CAA33101.1"/>
    <property type="molecule type" value="mRNA"/>
</dbReference>
<dbReference type="EMBL" id="BC062081">
    <property type="protein sequence ID" value="AAH62081.1"/>
    <property type="molecule type" value="mRNA"/>
</dbReference>
<dbReference type="EMBL" id="M19030">
    <property type="protein sequence ID" value="AAA40719.1"/>
    <property type="molecule type" value="mRNA"/>
</dbReference>
<dbReference type="EMBL" id="AY566467">
    <property type="protein sequence ID" value="AAS75813.1"/>
    <property type="molecule type" value="mRNA"/>
</dbReference>
<dbReference type="EMBL" id="AY566468">
    <property type="protein sequence ID" value="AAS75814.1"/>
    <property type="molecule type" value="mRNA"/>
</dbReference>
<dbReference type="EMBL" id="AY566469">
    <property type="protein sequence ID" value="AAS75815.1"/>
    <property type="molecule type" value="mRNA"/>
</dbReference>
<dbReference type="EMBL" id="AF529165">
    <property type="protein sequence ID" value="AAM94394.2"/>
    <property type="molecule type" value="mRNA"/>
</dbReference>
<dbReference type="EMBL" id="AY034137">
    <property type="protein sequence ID" value="AAK57732.1"/>
    <property type="molecule type" value="Genomic_DNA"/>
</dbReference>
<dbReference type="PIR" id="S03564">
    <property type="entry name" value="S03564"/>
</dbReference>
<dbReference type="RefSeq" id="NP_115792.1">
    <property type="nucleotide sequence ID" value="NM_032416.1"/>
</dbReference>
<dbReference type="PDB" id="1OM2">
    <property type="method" value="NMR"/>
    <property type="chains" value="B=12-20"/>
</dbReference>
<dbReference type="PDB" id="2V1S">
    <property type="method" value="X-ray"/>
    <property type="resolution" value="2.05 A"/>
    <property type="chains" value="H/I/J/K/L/M/N=12-24"/>
</dbReference>
<dbReference type="PDB" id="2V1T">
    <property type="method" value="X-ray"/>
    <property type="resolution" value="1.92 A"/>
    <property type="chains" value="C/D=12-22"/>
</dbReference>
<dbReference type="PDB" id="3AWR">
    <property type="method" value="X-ray"/>
    <property type="resolution" value="2.00 A"/>
    <property type="chains" value="C/D=12-20"/>
</dbReference>
<dbReference type="PDB" id="3AX2">
    <property type="method" value="X-ray"/>
    <property type="resolution" value="1.90 A"/>
    <property type="chains" value="B/D/F/H=12-20"/>
</dbReference>
<dbReference type="PDB" id="3AX3">
    <property type="method" value="X-ray"/>
    <property type="resolution" value="2.10 A"/>
    <property type="chains" value="B/D/F/H=12-20"/>
</dbReference>
<dbReference type="PDB" id="3AX5">
    <property type="method" value="X-ray"/>
    <property type="resolution" value="2.20 A"/>
    <property type="chains" value="B/D=12-20"/>
</dbReference>
<dbReference type="PDB" id="5AZ8">
    <property type="method" value="X-ray"/>
    <property type="resolution" value="1.70 A"/>
    <property type="chains" value="B=12-24"/>
</dbReference>
<dbReference type="PDBsum" id="1OM2"/>
<dbReference type="PDBsum" id="2V1S"/>
<dbReference type="PDBsum" id="2V1T"/>
<dbReference type="PDBsum" id="3AWR"/>
<dbReference type="PDBsum" id="3AX2"/>
<dbReference type="PDBsum" id="3AX3"/>
<dbReference type="PDBsum" id="3AX5"/>
<dbReference type="PDBsum" id="5AZ8"/>
<dbReference type="SMR" id="P11884"/>
<dbReference type="BioGRID" id="248173">
    <property type="interactions" value="2"/>
</dbReference>
<dbReference type="FunCoup" id="P11884">
    <property type="interactions" value="1705"/>
</dbReference>
<dbReference type="IntAct" id="P11884">
    <property type="interactions" value="3"/>
</dbReference>
<dbReference type="MINT" id="P11884"/>
<dbReference type="STRING" id="10116.ENSRNOP00000001816"/>
<dbReference type="BindingDB" id="P11884"/>
<dbReference type="ChEMBL" id="CHEMBL2812"/>
<dbReference type="DrugCentral" id="P11884"/>
<dbReference type="GuidetoPHARMACOLOGY" id="2595"/>
<dbReference type="CarbonylDB" id="P11884"/>
<dbReference type="GlyGen" id="P11884">
    <property type="glycosylation" value="2 sites, 1 O-linked glycan (1 site)"/>
</dbReference>
<dbReference type="iPTMnet" id="P11884"/>
<dbReference type="PhosphoSitePlus" id="P11884"/>
<dbReference type="jPOST" id="P11884"/>
<dbReference type="PaxDb" id="10116-ENSRNOP00000001816"/>
<dbReference type="GeneID" id="29539"/>
<dbReference type="KEGG" id="rno:29539"/>
<dbReference type="UCSC" id="RGD:69219">
    <property type="organism name" value="rat"/>
</dbReference>
<dbReference type="AGR" id="RGD:69219"/>
<dbReference type="CTD" id="217"/>
<dbReference type="RGD" id="69219">
    <property type="gene designation" value="Aldh2"/>
</dbReference>
<dbReference type="eggNOG" id="KOG2450">
    <property type="taxonomic scope" value="Eukaryota"/>
</dbReference>
<dbReference type="InParanoid" id="P11884"/>
<dbReference type="OrthoDB" id="310895at2759"/>
<dbReference type="PhylomeDB" id="P11884"/>
<dbReference type="BRENDA" id="1.2.1.3">
    <property type="organism ID" value="5301"/>
</dbReference>
<dbReference type="BRENDA" id="1.2.1.5">
    <property type="organism ID" value="5301"/>
</dbReference>
<dbReference type="Reactome" id="R-RNO-380612">
    <property type="pathway name" value="Metabolism of serotonin"/>
</dbReference>
<dbReference type="Reactome" id="R-RNO-445355">
    <property type="pathway name" value="Smooth Muscle Contraction"/>
</dbReference>
<dbReference type="Reactome" id="R-RNO-71384">
    <property type="pathway name" value="Ethanol oxidation"/>
</dbReference>
<dbReference type="Reactome" id="R-RNO-9837999">
    <property type="pathway name" value="Mitochondrial protein degradation"/>
</dbReference>
<dbReference type="SABIO-RK" id="P11884"/>
<dbReference type="UniPathway" id="UPA00780">
    <property type="reaction ID" value="UER00768"/>
</dbReference>
<dbReference type="EvolutionaryTrace" id="P11884"/>
<dbReference type="PRO" id="PR:P11884"/>
<dbReference type="Proteomes" id="UP000002494">
    <property type="component" value="Unplaced"/>
</dbReference>
<dbReference type="GO" id="GO:0005759">
    <property type="term" value="C:mitochondrial matrix"/>
    <property type="evidence" value="ECO:0000314"/>
    <property type="project" value="RGD"/>
</dbReference>
<dbReference type="GO" id="GO:0004029">
    <property type="term" value="F:aldehyde dehydrogenase (NAD+) activity"/>
    <property type="evidence" value="ECO:0000314"/>
    <property type="project" value="RGD"/>
</dbReference>
<dbReference type="GO" id="GO:0106435">
    <property type="term" value="F:carboxylesterase activity"/>
    <property type="evidence" value="ECO:0000250"/>
    <property type="project" value="UniProtKB"/>
</dbReference>
<dbReference type="GO" id="GO:0042802">
    <property type="term" value="F:identical protein binding"/>
    <property type="evidence" value="ECO:0000314"/>
    <property type="project" value="RGD"/>
</dbReference>
<dbReference type="GO" id="GO:0070404">
    <property type="term" value="F:NADH binding"/>
    <property type="evidence" value="ECO:0000314"/>
    <property type="project" value="RGD"/>
</dbReference>
<dbReference type="GO" id="GO:0008957">
    <property type="term" value="F:phenylacetaldehyde dehydrogenase (NAD+) activity"/>
    <property type="evidence" value="ECO:0000250"/>
    <property type="project" value="UniProtKB"/>
</dbReference>
<dbReference type="GO" id="GO:0006117">
    <property type="term" value="P:acetaldehyde metabolic process"/>
    <property type="evidence" value="ECO:0000315"/>
    <property type="project" value="RGD"/>
</dbReference>
<dbReference type="GO" id="GO:0046185">
    <property type="term" value="P:aldehyde catabolic process"/>
    <property type="evidence" value="ECO:0000250"/>
    <property type="project" value="UniProtKB"/>
</dbReference>
<dbReference type="GO" id="GO:0008637">
    <property type="term" value="P:apoptotic mitochondrial changes"/>
    <property type="evidence" value="ECO:0000270"/>
    <property type="project" value="RGD"/>
</dbReference>
<dbReference type="GO" id="GO:0048149">
    <property type="term" value="P:behavioral response to ethanol"/>
    <property type="evidence" value="ECO:0000315"/>
    <property type="project" value="RGD"/>
</dbReference>
<dbReference type="GO" id="GO:0110095">
    <property type="term" value="P:cellular detoxification of aldehyde"/>
    <property type="evidence" value="ECO:0000315"/>
    <property type="project" value="RGD"/>
</dbReference>
<dbReference type="GO" id="GO:0071398">
    <property type="term" value="P:cellular response to fatty acid"/>
    <property type="evidence" value="ECO:0000270"/>
    <property type="project" value="RGD"/>
</dbReference>
<dbReference type="GO" id="GO:0032870">
    <property type="term" value="P:cellular response to hormone stimulus"/>
    <property type="evidence" value="ECO:0000270"/>
    <property type="project" value="RGD"/>
</dbReference>
<dbReference type="GO" id="GO:1904639">
    <property type="term" value="P:cellular response to resveratrol"/>
    <property type="evidence" value="ECO:0000270"/>
    <property type="project" value="RGD"/>
</dbReference>
<dbReference type="GO" id="GO:0006068">
    <property type="term" value="P:ethanol catabolic process"/>
    <property type="evidence" value="ECO:0007669"/>
    <property type="project" value="UniProtKB-UniPathway"/>
</dbReference>
<dbReference type="GO" id="GO:0006067">
    <property type="term" value="P:ethanol metabolic process"/>
    <property type="evidence" value="ECO:0000270"/>
    <property type="project" value="RGD"/>
</dbReference>
<dbReference type="GO" id="GO:0008631">
    <property type="term" value="P:intrinsic apoptotic signaling pathway in response to oxidative stress"/>
    <property type="evidence" value="ECO:0000315"/>
    <property type="project" value="RGD"/>
</dbReference>
<dbReference type="GO" id="GO:0001889">
    <property type="term" value="P:liver development"/>
    <property type="evidence" value="ECO:0000270"/>
    <property type="project" value="RGD"/>
</dbReference>
<dbReference type="GO" id="GO:0043066">
    <property type="term" value="P:negative regulation of apoptotic process"/>
    <property type="evidence" value="ECO:0000315"/>
    <property type="project" value="RGD"/>
</dbReference>
<dbReference type="GO" id="GO:0018937">
    <property type="term" value="P:nitroglycerin metabolic process"/>
    <property type="evidence" value="ECO:0000250"/>
    <property type="project" value="UniProtKB"/>
</dbReference>
<dbReference type="GO" id="GO:1903179">
    <property type="term" value="P:regulation of dopamine biosynthetic process"/>
    <property type="evidence" value="ECO:0000250"/>
    <property type="project" value="UniProtKB"/>
</dbReference>
<dbReference type="GO" id="GO:2000377">
    <property type="term" value="P:regulation of reactive oxygen species metabolic process"/>
    <property type="evidence" value="ECO:0000315"/>
    <property type="project" value="RGD"/>
</dbReference>
<dbReference type="GO" id="GO:1902882">
    <property type="term" value="P:regulation of response to oxidative stress"/>
    <property type="evidence" value="ECO:0000270"/>
    <property type="project" value="RGD"/>
</dbReference>
<dbReference type="GO" id="GO:1905627">
    <property type="term" value="P:regulation of serotonin biosynthetic process"/>
    <property type="evidence" value="ECO:0000250"/>
    <property type="project" value="UniProtKB"/>
</dbReference>
<dbReference type="GO" id="GO:0032355">
    <property type="term" value="P:response to estradiol"/>
    <property type="evidence" value="ECO:0000270"/>
    <property type="project" value="RGD"/>
</dbReference>
<dbReference type="GO" id="GO:0045471">
    <property type="term" value="P:response to ethanol"/>
    <property type="evidence" value="ECO:0000270"/>
    <property type="project" value="RGD"/>
</dbReference>
<dbReference type="GO" id="GO:0055093">
    <property type="term" value="P:response to hyperoxia"/>
    <property type="evidence" value="ECO:0000270"/>
    <property type="project" value="RGD"/>
</dbReference>
<dbReference type="GO" id="GO:0002931">
    <property type="term" value="P:response to ischemia"/>
    <property type="evidence" value="ECO:0000270"/>
    <property type="project" value="RGD"/>
</dbReference>
<dbReference type="GO" id="GO:0032496">
    <property type="term" value="P:response to lipopolysaccharide"/>
    <property type="evidence" value="ECO:0000270"/>
    <property type="project" value="RGD"/>
</dbReference>
<dbReference type="GO" id="GO:0035094">
    <property type="term" value="P:response to nicotine"/>
    <property type="evidence" value="ECO:0000270"/>
    <property type="project" value="RGD"/>
</dbReference>
<dbReference type="GO" id="GO:0032570">
    <property type="term" value="P:response to progesterone"/>
    <property type="evidence" value="ECO:0000270"/>
    <property type="project" value="RGD"/>
</dbReference>
<dbReference type="GO" id="GO:0033574">
    <property type="term" value="P:response to testosterone"/>
    <property type="evidence" value="ECO:0000270"/>
    <property type="project" value="RGD"/>
</dbReference>
<dbReference type="CDD" id="cd07141">
    <property type="entry name" value="ALDH_F1AB_F2_RALDH1"/>
    <property type="match status" value="1"/>
</dbReference>
<dbReference type="FunFam" id="3.40.605.10:FF:000029">
    <property type="entry name" value="Aldehyde dehydrogenase, mitochondrial"/>
    <property type="match status" value="1"/>
</dbReference>
<dbReference type="FunFam" id="3.40.605.10:FF:000026">
    <property type="entry name" value="Aldehyde dehydrogenase, putative"/>
    <property type="match status" value="1"/>
</dbReference>
<dbReference type="FunFam" id="3.40.309.10:FF:000001">
    <property type="entry name" value="Mitochondrial aldehyde dehydrogenase 2"/>
    <property type="match status" value="1"/>
</dbReference>
<dbReference type="Gene3D" id="3.40.605.10">
    <property type="entry name" value="Aldehyde Dehydrogenase, Chain A, domain 1"/>
    <property type="match status" value="1"/>
</dbReference>
<dbReference type="Gene3D" id="3.40.309.10">
    <property type="entry name" value="Aldehyde Dehydrogenase, Chain A, domain 2"/>
    <property type="match status" value="1"/>
</dbReference>
<dbReference type="InterPro" id="IPR016161">
    <property type="entry name" value="Ald_DH/histidinol_DH"/>
</dbReference>
<dbReference type="InterPro" id="IPR016163">
    <property type="entry name" value="Ald_DH_C"/>
</dbReference>
<dbReference type="InterPro" id="IPR016160">
    <property type="entry name" value="Ald_DH_CS_CYS"/>
</dbReference>
<dbReference type="InterPro" id="IPR029510">
    <property type="entry name" value="Ald_DH_CS_GLU"/>
</dbReference>
<dbReference type="InterPro" id="IPR016162">
    <property type="entry name" value="Ald_DH_N"/>
</dbReference>
<dbReference type="InterPro" id="IPR015590">
    <property type="entry name" value="Aldehyde_DH_dom"/>
</dbReference>
<dbReference type="PANTHER" id="PTHR11699">
    <property type="entry name" value="ALDEHYDE DEHYDROGENASE-RELATED"/>
    <property type="match status" value="1"/>
</dbReference>
<dbReference type="Pfam" id="PF00171">
    <property type="entry name" value="Aldedh"/>
    <property type="match status" value="1"/>
</dbReference>
<dbReference type="SUPFAM" id="SSF53720">
    <property type="entry name" value="ALDH-like"/>
    <property type="match status" value="1"/>
</dbReference>
<dbReference type="PROSITE" id="PS00070">
    <property type="entry name" value="ALDEHYDE_DEHYDR_CYS"/>
    <property type="match status" value="1"/>
</dbReference>
<dbReference type="PROSITE" id="PS00687">
    <property type="entry name" value="ALDEHYDE_DEHYDR_GLU"/>
    <property type="match status" value="1"/>
</dbReference>
<sequence length="519" mass="56488">MLRAALSTARRGPRLSRLLSAAATSAVPAPNQQPEVFCNQIFINNEWHDAVSKKTFPTVNPSTGEVICQVAEGNKEDVDKAVKAAQAAFQLGSPWRRMDASDRGRLLYRLADLIERDRTYLAALETLDNGKPYVISYLVDLDMVLKCLRYYAGWADKYHGKTIPIDGDFFSYTRHEPVGVCGQIIPWNFPLLMQAWKLGPALATGNVVVMKVAEQTPLTALYVANLIKEAGFPPGVVNIVPGFGPTAGAAIASHEDVDKVAFTGSTEVGHLIQVAAGSSNLKRVTLELGGKSPNIIMSDADMDWAVEQAHFALFFNQGQCCCAGSRTFVQEDVYDEFVERSVARAKSRVVGNPFDSRTEQGPQVDETQFKKILGYIKSGQQEGAKLLCGGGAAADRGYFIQPTVFGDVKDGMTIAKEEIFGPVMQILKFKTIEEVVGRANNSKYGLAAAVFTKDLDKANYLSQALQAGTVWINCYDVFGAQSPFGGYKMSGSGRELGEYGLQAYTEVKTVTVKVPQKNS</sequence>
<proteinExistence type="evidence at protein level"/>
<name>ALDH2_RAT</name>
<gene>
    <name type="primary">Aldh2</name>
</gene>
<organism>
    <name type="scientific">Rattus norvegicus</name>
    <name type="common">Rat</name>
    <dbReference type="NCBI Taxonomy" id="10116"/>
    <lineage>
        <taxon>Eukaryota</taxon>
        <taxon>Metazoa</taxon>
        <taxon>Chordata</taxon>
        <taxon>Craniata</taxon>
        <taxon>Vertebrata</taxon>
        <taxon>Euteleostomi</taxon>
        <taxon>Mammalia</taxon>
        <taxon>Eutheria</taxon>
        <taxon>Euarchontoglires</taxon>
        <taxon>Glires</taxon>
        <taxon>Rodentia</taxon>
        <taxon>Myomorpha</taxon>
        <taxon>Muroidea</taxon>
        <taxon>Muridae</taxon>
        <taxon>Murinae</taxon>
        <taxon>Rattus</taxon>
    </lineage>
</organism>